<name>NIFH_PECAS</name>
<keyword id="KW-0004">4Fe-4S</keyword>
<keyword id="KW-0013">ADP-ribosylation</keyword>
<keyword id="KW-0067">ATP-binding</keyword>
<keyword id="KW-0408">Iron</keyword>
<keyword id="KW-0411">Iron-sulfur</keyword>
<keyword id="KW-0479">Metal-binding</keyword>
<keyword id="KW-0535">Nitrogen fixation</keyword>
<keyword id="KW-0547">Nucleotide-binding</keyword>
<keyword id="KW-0560">Oxidoreductase</keyword>
<keyword id="KW-1185">Reference proteome</keyword>
<dbReference type="EC" id="1.18.6.1" evidence="1"/>
<dbReference type="EMBL" id="BX950851">
    <property type="protein sequence ID" value="CAG75856.1"/>
    <property type="molecule type" value="Genomic_DNA"/>
</dbReference>
<dbReference type="RefSeq" id="WP_011094487.1">
    <property type="nucleotide sequence ID" value="NC_004547.2"/>
</dbReference>
<dbReference type="SMR" id="Q6D2Y8"/>
<dbReference type="STRING" id="218491.ECA2956"/>
<dbReference type="GeneID" id="57209642"/>
<dbReference type="KEGG" id="eca:ECA2956"/>
<dbReference type="eggNOG" id="COG1348">
    <property type="taxonomic scope" value="Bacteria"/>
</dbReference>
<dbReference type="HOGENOM" id="CLU_059373_0_0_6"/>
<dbReference type="OrthoDB" id="9815116at2"/>
<dbReference type="Proteomes" id="UP000007966">
    <property type="component" value="Chromosome"/>
</dbReference>
<dbReference type="GO" id="GO:0051539">
    <property type="term" value="F:4 iron, 4 sulfur cluster binding"/>
    <property type="evidence" value="ECO:0007669"/>
    <property type="project" value="UniProtKB-KW"/>
</dbReference>
<dbReference type="GO" id="GO:0005524">
    <property type="term" value="F:ATP binding"/>
    <property type="evidence" value="ECO:0007669"/>
    <property type="project" value="UniProtKB-UniRule"/>
</dbReference>
<dbReference type="GO" id="GO:0046872">
    <property type="term" value="F:metal ion binding"/>
    <property type="evidence" value="ECO:0007669"/>
    <property type="project" value="UniProtKB-KW"/>
</dbReference>
<dbReference type="GO" id="GO:0016163">
    <property type="term" value="F:nitrogenase activity"/>
    <property type="evidence" value="ECO:0007669"/>
    <property type="project" value="UniProtKB-UniRule"/>
</dbReference>
<dbReference type="GO" id="GO:0009399">
    <property type="term" value="P:nitrogen fixation"/>
    <property type="evidence" value="ECO:0007669"/>
    <property type="project" value="UniProtKB-UniRule"/>
</dbReference>
<dbReference type="CDD" id="cd02040">
    <property type="entry name" value="NifH"/>
    <property type="match status" value="1"/>
</dbReference>
<dbReference type="FunFam" id="3.40.50.300:FF:001379">
    <property type="entry name" value="Nitrogenase iron protein 1"/>
    <property type="match status" value="1"/>
</dbReference>
<dbReference type="Gene3D" id="3.40.50.300">
    <property type="entry name" value="P-loop containing nucleotide triphosphate hydrolases"/>
    <property type="match status" value="1"/>
</dbReference>
<dbReference type="HAMAP" id="MF_00533">
    <property type="entry name" value="NifH"/>
    <property type="match status" value="1"/>
</dbReference>
<dbReference type="InterPro" id="IPR030655">
    <property type="entry name" value="NifH/chlL_CS"/>
</dbReference>
<dbReference type="InterPro" id="IPR000392">
    <property type="entry name" value="NifH/frxC"/>
</dbReference>
<dbReference type="InterPro" id="IPR005977">
    <property type="entry name" value="Nitrogenase_Fe_NifH"/>
</dbReference>
<dbReference type="InterPro" id="IPR027417">
    <property type="entry name" value="P-loop_NTPase"/>
</dbReference>
<dbReference type="NCBIfam" id="TIGR01287">
    <property type="entry name" value="nifH"/>
    <property type="match status" value="1"/>
</dbReference>
<dbReference type="PANTHER" id="PTHR42864">
    <property type="entry name" value="LIGHT-INDEPENDENT PROTOCHLOROPHYLLIDE REDUCTASE IRON-SULFUR ATP-BINDING PROTEIN"/>
    <property type="match status" value="1"/>
</dbReference>
<dbReference type="PANTHER" id="PTHR42864:SF2">
    <property type="entry name" value="LIGHT-INDEPENDENT PROTOCHLOROPHYLLIDE REDUCTASE IRON-SULFUR ATP-BINDING PROTEIN"/>
    <property type="match status" value="1"/>
</dbReference>
<dbReference type="Pfam" id="PF00142">
    <property type="entry name" value="Fer4_NifH"/>
    <property type="match status" value="1"/>
</dbReference>
<dbReference type="PIRSF" id="PIRSF000363">
    <property type="entry name" value="Nitrogenase_iron"/>
    <property type="match status" value="1"/>
</dbReference>
<dbReference type="PRINTS" id="PR00091">
    <property type="entry name" value="NITROGNASEII"/>
</dbReference>
<dbReference type="SUPFAM" id="SSF52540">
    <property type="entry name" value="P-loop containing nucleoside triphosphate hydrolases"/>
    <property type="match status" value="1"/>
</dbReference>
<dbReference type="PROSITE" id="PS00746">
    <property type="entry name" value="NIFH_FRXC_1"/>
    <property type="match status" value="1"/>
</dbReference>
<dbReference type="PROSITE" id="PS00692">
    <property type="entry name" value="NIFH_FRXC_2"/>
    <property type="match status" value="1"/>
</dbReference>
<dbReference type="PROSITE" id="PS51026">
    <property type="entry name" value="NIFH_FRXC_3"/>
    <property type="match status" value="1"/>
</dbReference>
<comment type="function">
    <text evidence="1">The key enzymatic reactions in nitrogen fixation are catalyzed by the nitrogenase complex, which has 2 components: the iron protein and the molybdenum-iron protein.</text>
</comment>
<comment type="catalytic activity">
    <reaction evidence="1">
        <text>N2 + 8 reduced [2Fe-2S]-[ferredoxin] + 16 ATP + 16 H2O = H2 + 8 oxidized [2Fe-2S]-[ferredoxin] + 2 NH4(+) + 16 ADP + 16 phosphate + 6 H(+)</text>
        <dbReference type="Rhea" id="RHEA:21448"/>
        <dbReference type="Rhea" id="RHEA-COMP:10000"/>
        <dbReference type="Rhea" id="RHEA-COMP:10001"/>
        <dbReference type="ChEBI" id="CHEBI:15377"/>
        <dbReference type="ChEBI" id="CHEBI:15378"/>
        <dbReference type="ChEBI" id="CHEBI:17997"/>
        <dbReference type="ChEBI" id="CHEBI:18276"/>
        <dbReference type="ChEBI" id="CHEBI:28938"/>
        <dbReference type="ChEBI" id="CHEBI:30616"/>
        <dbReference type="ChEBI" id="CHEBI:33737"/>
        <dbReference type="ChEBI" id="CHEBI:33738"/>
        <dbReference type="ChEBI" id="CHEBI:43474"/>
        <dbReference type="ChEBI" id="CHEBI:456216"/>
        <dbReference type="EC" id="1.18.6.1"/>
    </reaction>
</comment>
<comment type="cofactor">
    <cofactor evidence="1">
        <name>[4Fe-4S] cluster</name>
        <dbReference type="ChEBI" id="CHEBI:49883"/>
    </cofactor>
    <text evidence="1">Binds 1 [4Fe-4S] cluster per dimer.</text>
</comment>
<comment type="subunit">
    <text evidence="1">Homodimer.</text>
</comment>
<comment type="PTM">
    <text evidence="1">The reversible ADP-ribosylation of Arg-101 inactivates the nitrogenase reductase and regulates nitrogenase activity.</text>
</comment>
<comment type="similarity">
    <text evidence="1">Belongs to the NifH/BchL/ChlL family.</text>
</comment>
<organism>
    <name type="scientific">Pectobacterium atrosepticum (strain SCRI 1043 / ATCC BAA-672)</name>
    <name type="common">Erwinia carotovora subsp. atroseptica</name>
    <dbReference type="NCBI Taxonomy" id="218491"/>
    <lineage>
        <taxon>Bacteria</taxon>
        <taxon>Pseudomonadati</taxon>
        <taxon>Pseudomonadota</taxon>
        <taxon>Gammaproteobacteria</taxon>
        <taxon>Enterobacterales</taxon>
        <taxon>Pectobacteriaceae</taxon>
        <taxon>Pectobacterium</taxon>
    </lineage>
</organism>
<feature type="chain" id="PRO_1000211869" description="Nitrogenase iron protein">
    <location>
        <begin position="1"/>
        <end position="293"/>
    </location>
</feature>
<feature type="binding site" evidence="1">
    <location>
        <begin position="10"/>
        <end position="17"/>
    </location>
    <ligand>
        <name>ATP</name>
        <dbReference type="ChEBI" id="CHEBI:30616"/>
    </ligand>
</feature>
<feature type="binding site" evidence="1">
    <location>
        <position position="98"/>
    </location>
    <ligand>
        <name>[4Fe-4S] cluster</name>
        <dbReference type="ChEBI" id="CHEBI:49883"/>
        <note>ligand shared between dimeric partners</note>
    </ligand>
</feature>
<feature type="binding site" evidence="1">
    <location>
        <position position="133"/>
    </location>
    <ligand>
        <name>[4Fe-4S] cluster</name>
        <dbReference type="ChEBI" id="CHEBI:49883"/>
        <note>ligand shared between dimeric partners</note>
    </ligand>
</feature>
<feature type="modified residue" description="ADP-ribosylarginine; by dinitrogenase reductase ADP-ribosyltransferase" evidence="1">
    <location>
        <position position="101"/>
    </location>
</feature>
<reference key="1">
    <citation type="journal article" date="2004" name="Proc. Natl. Acad. Sci. U.S.A.">
        <title>Genome sequence of the enterobacterial phytopathogen Erwinia carotovora subsp. atroseptica and characterization of virulence factors.</title>
        <authorList>
            <person name="Bell K.S."/>
            <person name="Sebaihia M."/>
            <person name="Pritchard L."/>
            <person name="Holden M.T.G."/>
            <person name="Hyman L.J."/>
            <person name="Holeva M.C."/>
            <person name="Thomson N.R."/>
            <person name="Bentley S.D."/>
            <person name="Churcher L.J.C."/>
            <person name="Mungall K."/>
            <person name="Atkin R."/>
            <person name="Bason N."/>
            <person name="Brooks K."/>
            <person name="Chillingworth T."/>
            <person name="Clark K."/>
            <person name="Doggett J."/>
            <person name="Fraser A."/>
            <person name="Hance Z."/>
            <person name="Hauser H."/>
            <person name="Jagels K."/>
            <person name="Moule S."/>
            <person name="Norbertczak H."/>
            <person name="Ormond D."/>
            <person name="Price C."/>
            <person name="Quail M.A."/>
            <person name="Sanders M."/>
            <person name="Walker D."/>
            <person name="Whitehead S."/>
            <person name="Salmond G.P.C."/>
            <person name="Birch P.R.J."/>
            <person name="Parkhill J."/>
            <person name="Toth I.K."/>
        </authorList>
    </citation>
    <scope>NUCLEOTIDE SEQUENCE [LARGE SCALE GENOMIC DNA]</scope>
    <source>
        <strain>SCRI 1043 / ATCC BAA-672</strain>
    </source>
</reference>
<gene>
    <name evidence="1" type="primary">nifH</name>
    <name type="ordered locus">ECA2956</name>
</gene>
<protein>
    <recommendedName>
        <fullName evidence="1">Nitrogenase iron protein</fullName>
        <ecNumber evidence="1">1.18.6.1</ecNumber>
    </recommendedName>
    <alternativeName>
        <fullName evidence="1">Nitrogenase Fe protein</fullName>
    </alternativeName>
    <alternativeName>
        <fullName evidence="1">Nitrogenase component II</fullName>
    </alternativeName>
    <alternativeName>
        <fullName evidence="1">Nitrogenase reductase</fullName>
    </alternativeName>
</protein>
<proteinExistence type="inferred from homology"/>
<evidence type="ECO:0000255" key="1">
    <source>
        <dbReference type="HAMAP-Rule" id="MF_00533"/>
    </source>
</evidence>
<accession>Q6D2Y8</accession>
<sequence>MAMRQCAIYGKGGIGKSTTTQNLVAALAEMGKKIMIVGCDPKADSTRLILHAKAQNTIMEMAAEVGSVEDLELEDVLQIGYGNVRCAESGGPEPGVGCAGRGVITAINFLEEEGAYVDDLDFVFYDVLGDVVCGGFAMPIRENKAQEIYIVCSGEMMAMYAANNICKGIVKYAKTGKVRLGGLICNSRNTDREDELIIALAEKIGTQMIHFVPRDNIVQRAEIRRMTVIEYDPNCSQANEYRQLAQKIVANTMKVIPVPCTMDELEELLMEFGIMEEEDTTIIGKTAAEENAA</sequence>